<name>MIEAP_MACFA</name>
<organism>
    <name type="scientific">Macaca fascicularis</name>
    <name type="common">Crab-eating macaque</name>
    <name type="synonym">Cynomolgus monkey</name>
    <dbReference type="NCBI Taxonomy" id="9541"/>
    <lineage>
        <taxon>Eukaryota</taxon>
        <taxon>Metazoa</taxon>
        <taxon>Chordata</taxon>
        <taxon>Craniata</taxon>
        <taxon>Vertebrata</taxon>
        <taxon>Euteleostomi</taxon>
        <taxon>Mammalia</taxon>
        <taxon>Eutheria</taxon>
        <taxon>Euarchontoglires</taxon>
        <taxon>Primates</taxon>
        <taxon>Haplorrhini</taxon>
        <taxon>Catarrhini</taxon>
        <taxon>Cercopithecidae</taxon>
        <taxon>Cercopithecinae</taxon>
        <taxon>Macaca</taxon>
    </lineage>
</organism>
<keyword id="KW-0175">Coiled coil</keyword>
<keyword id="KW-0963">Cytoplasm</keyword>
<keyword id="KW-0446">Lipid-binding</keyword>
<keyword id="KW-0472">Membrane</keyword>
<keyword id="KW-0496">Mitochondrion</keyword>
<keyword id="KW-1000">Mitochondrion outer membrane</keyword>
<keyword id="KW-0597">Phosphoprotein</keyword>
<keyword id="KW-1185">Reference proteome</keyword>
<gene>
    <name type="primary">SPATA18</name>
    <name type="synonym">MIEAP</name>
    <name type="ORF">QtsA-10472</name>
    <name type="ORF">QtsA-12015</name>
    <name type="ORF">QtsA-14813</name>
</gene>
<feature type="chain" id="PRO_0000254166" description="Mitochondria-eating protein">
    <location>
        <begin position="1"/>
        <end position="538"/>
    </location>
</feature>
<feature type="region of interest" description="Interaction with YWHAG/14-3-3 protein gamma" evidence="2">
    <location>
        <begin position="1"/>
        <end position="273"/>
    </location>
</feature>
<feature type="region of interest" description="Disordered" evidence="4">
    <location>
        <begin position="92"/>
        <end position="137"/>
    </location>
</feature>
<feature type="region of interest" description="Disordered" evidence="4">
    <location>
        <begin position="174"/>
        <end position="227"/>
    </location>
</feature>
<feature type="region of interest" description="Disordered" evidence="4">
    <location>
        <begin position="247"/>
        <end position="292"/>
    </location>
</feature>
<feature type="coiled-coil region" evidence="3">
    <location>
        <begin position="118"/>
        <end position="186"/>
    </location>
</feature>
<feature type="coiled-coil region" evidence="3">
    <location>
        <begin position="220"/>
        <end position="256"/>
    </location>
</feature>
<feature type="compositionally biased region" description="Basic and acidic residues" evidence="4">
    <location>
        <begin position="106"/>
        <end position="122"/>
    </location>
</feature>
<feature type="compositionally biased region" description="Polar residues" evidence="4">
    <location>
        <begin position="123"/>
        <end position="137"/>
    </location>
</feature>
<feature type="compositionally biased region" description="Basic and acidic residues" evidence="4">
    <location>
        <begin position="181"/>
        <end position="209"/>
    </location>
</feature>
<feature type="compositionally biased region" description="Basic and acidic residues" evidence="4">
    <location>
        <begin position="216"/>
        <end position="227"/>
    </location>
</feature>
<feature type="compositionally biased region" description="Low complexity" evidence="4">
    <location>
        <begin position="253"/>
        <end position="278"/>
    </location>
</feature>
<feature type="modified residue" description="Phosphoserine" evidence="1">
    <location>
        <position position="85"/>
    </location>
</feature>
<feature type="modified residue" description="Phosphoserine" evidence="1">
    <location>
        <position position="156"/>
    </location>
</feature>
<feature type="modified residue" description="Phosphoserine" evidence="1">
    <location>
        <position position="159"/>
    </location>
</feature>
<feature type="modified residue" description="Phosphoserine" evidence="1">
    <location>
        <position position="285"/>
    </location>
</feature>
<feature type="modified residue" description="Phosphoserine" evidence="1">
    <location>
        <position position="287"/>
    </location>
</feature>
<feature type="modified residue" description="Phosphoserine" evidence="1">
    <location>
        <position position="509"/>
    </location>
</feature>
<feature type="sequence conflict" description="In Ref. 1; BAE00899." evidence="5" ref="1">
    <original>EAFHVAKMAFRHFKIRV</original>
    <variation>GLANHDLWTISGPGSYF</variation>
    <location>
        <begin position="341"/>
        <end position="357"/>
    </location>
</feature>
<protein>
    <recommendedName>
        <fullName>Mitochondria-eating protein</fullName>
    </recommendedName>
    <alternativeName>
        <fullName>Spermatogenesis-associated protein 18</fullName>
    </alternativeName>
</protein>
<proteinExistence type="evidence at transcript level"/>
<accession>Q95K37</accession>
<accession>Q4R7M3</accession>
<accession>Q4R8N1</accession>
<comment type="function">
    <text evidence="2">Key regulator of mitochondrial quality that mediates the repairing or degradation of unhealthy mitochondria in response to mitochondrial damage. Mediator of mitochondrial protein catabolic process (also named MALM) by mediating the degradation of damaged proteins inside mitochondria by promoting the accumulation in the mitochondrial matrix of hydrolases that are characteristic of the lysosomal lumen. Also involved in mitochondrion degradation of damaged mitochondria by promoting the formation of vacuole-like structures (named MIV), which engulf and degrade unhealthy mitochondria by accumulating lysosomes. The physical interaction of SPATA18/MIEAP, BNIP3 and BNIP3L/NIX at the mitochondrial outer membrane regulates the opening of a pore in the mitochondrial double membrane in order to mediate the translocation of lysosomal proteins from the cytoplasm to the mitochondrial matrix. Binds cardiolipin. May form molecular condensates (non-membrane-bounded organelles) within mitochondria that compartmentalize and promote cardiolipin metabolism.</text>
</comment>
<comment type="subunit">
    <text evidence="2">Interacts (via coiled-coil domains) with BNIP3L (via BH3 domain). Interacts (via coiled-coil domains) with BNIP3 (via BH3 domain). Interacts with YWHAG/14-3-3 protein gamma; a protein that also plays a role in MALM.</text>
</comment>
<comment type="subcellular location">
    <subcellularLocation>
        <location evidence="2">Cytoplasm</location>
        <location evidence="2">Cytosol</location>
    </subcellularLocation>
    <subcellularLocation>
        <location evidence="2">Mitochondrion outer membrane</location>
    </subcellularLocation>
    <subcellularLocation>
        <location evidence="2">Mitochondrion matrix</location>
    </subcellularLocation>
    <text evidence="2">Localizes to the cytosol under normal conditions. Relocalizes to mitochondrion outer membrane following cellular stress. May form molecular condensates in the mitochondrial matrix. Colocalizes with BNIP3 and BNIP3L at the mitochondrion outer membrane.</text>
</comment>
<comment type="similarity">
    <text evidence="5">Belongs to the MIEAP family.</text>
</comment>
<comment type="sequence caution" evidence="5">
    <conflict type="erroneous initiation">
        <sequence resource="EMBL-CDS" id="BAB62935"/>
    </conflict>
    <text>Truncated N-terminus.</text>
</comment>
<comment type="sequence caution" evidence="5">
    <conflict type="erroneous initiation">
        <sequence resource="EMBL-CDS" id="BAE00541"/>
    </conflict>
    <text>Truncated N-terminus.</text>
</comment>
<dbReference type="EMBL" id="AB168420">
    <property type="protein sequence ID" value="BAE00541.1"/>
    <property type="status" value="ALT_INIT"/>
    <property type="molecule type" value="mRNA"/>
</dbReference>
<dbReference type="EMBL" id="AB168792">
    <property type="protein sequence ID" value="BAE00899.1"/>
    <property type="molecule type" value="mRNA"/>
</dbReference>
<dbReference type="EMBL" id="AB069990">
    <property type="protein sequence ID" value="BAB62935.1"/>
    <property type="status" value="ALT_INIT"/>
    <property type="molecule type" value="mRNA"/>
</dbReference>
<dbReference type="RefSeq" id="XP_005555362.3">
    <property type="nucleotide sequence ID" value="XM_005555305.4"/>
</dbReference>
<dbReference type="SMR" id="Q95K37"/>
<dbReference type="STRING" id="9541.ENSMFAP00000023350"/>
<dbReference type="GeneID" id="101865904"/>
<dbReference type="KEGG" id="mcf:101865904"/>
<dbReference type="CTD" id="132671"/>
<dbReference type="VEuPathDB" id="HostDB:ENSMFAG00000043327"/>
<dbReference type="eggNOG" id="ENOG502QQMJ">
    <property type="taxonomic scope" value="Eukaryota"/>
</dbReference>
<dbReference type="Proteomes" id="UP000233100">
    <property type="component" value="Chromosome 5"/>
</dbReference>
<dbReference type="GO" id="GO:0005829">
    <property type="term" value="C:cytosol"/>
    <property type="evidence" value="ECO:0007669"/>
    <property type="project" value="UniProtKB-SubCell"/>
</dbReference>
<dbReference type="GO" id="GO:0043231">
    <property type="term" value="C:intracellular membrane-bounded organelle"/>
    <property type="evidence" value="ECO:0000250"/>
    <property type="project" value="UniProtKB"/>
</dbReference>
<dbReference type="GO" id="GO:0005759">
    <property type="term" value="C:mitochondrial matrix"/>
    <property type="evidence" value="ECO:0000250"/>
    <property type="project" value="UniProtKB"/>
</dbReference>
<dbReference type="GO" id="GO:0005741">
    <property type="term" value="C:mitochondrial outer membrane"/>
    <property type="evidence" value="ECO:0007669"/>
    <property type="project" value="UniProtKB-SubCell"/>
</dbReference>
<dbReference type="GO" id="GO:0005739">
    <property type="term" value="C:mitochondrion"/>
    <property type="evidence" value="ECO:0000250"/>
    <property type="project" value="UniProtKB"/>
</dbReference>
<dbReference type="GO" id="GO:1901612">
    <property type="term" value="F:cardiolipin binding"/>
    <property type="evidence" value="ECO:0000250"/>
    <property type="project" value="UniProtKB"/>
</dbReference>
<dbReference type="GO" id="GO:0035694">
    <property type="term" value="P:mitochondrial protein catabolic process"/>
    <property type="evidence" value="ECO:0000250"/>
    <property type="project" value="UniProtKB"/>
</dbReference>
<dbReference type="GO" id="GO:0035695">
    <property type="term" value="P:mitophagy by internal vacuole formation"/>
    <property type="evidence" value="ECO:0007669"/>
    <property type="project" value="TreeGrafter"/>
</dbReference>
<dbReference type="InterPro" id="IPR026169">
    <property type="entry name" value="MIEAP"/>
</dbReference>
<dbReference type="InterPro" id="IPR031981">
    <property type="entry name" value="MIEAP_C"/>
</dbReference>
<dbReference type="PANTHER" id="PTHR21771:SF0">
    <property type="entry name" value="MITOCHONDRIA-EATING PROTEIN"/>
    <property type="match status" value="1"/>
</dbReference>
<dbReference type="PANTHER" id="PTHR21771">
    <property type="entry name" value="MITOCHONDRIA-EATING PROTEIN-RELATED"/>
    <property type="match status" value="1"/>
</dbReference>
<dbReference type="Pfam" id="PF16026">
    <property type="entry name" value="MIEAP"/>
    <property type="match status" value="1"/>
</dbReference>
<reference key="1">
    <citation type="submission" date="2005-06" db="EMBL/GenBank/DDBJ databases">
        <title>DNA sequences of macaque genes expressed in brain or testis and its evolutionary implications.</title>
        <authorList>
            <consortium name="International consortium for macaque cDNA sequencing and analysis"/>
        </authorList>
    </citation>
    <scope>NUCLEOTIDE SEQUENCE [LARGE SCALE MRNA] OF 1-357 AND 249-538</scope>
    <source>
        <tissue>Testis</tissue>
    </source>
</reference>
<reference key="2">
    <citation type="journal article" date="2002" name="BMC Genomics">
        <title>Cynomolgus monkey testicular cDNAs for discovery of novel human genes in the human genome sequence.</title>
        <authorList>
            <person name="Osada N."/>
            <person name="Hida M."/>
            <person name="Kusuda J."/>
            <person name="Tanuma R."/>
            <person name="Hirata M."/>
            <person name="Suto Y."/>
            <person name="Hirai M."/>
            <person name="Terao K."/>
            <person name="Sugano S."/>
            <person name="Hashimoto K."/>
        </authorList>
    </citation>
    <scope>NUCLEOTIDE SEQUENCE [LARGE SCALE MRNA] OF 96-538</scope>
    <source>
        <tissue>Testis</tissue>
    </source>
</reference>
<sequence>MAENLKRLVSNEALRTLQEKLDSWLKEYNTNTCDQNLNHCLELIEQVAKVQGQLFGILTTAAQEGGHNDGVETIKSRLLPWLEASFTAASMGKPVDSKVPSLQNTFDRERRKDPSPRDRDMQQLDSNLNSTRSQLNQVQDDLAETEKNLEETKNRSAISLLAAEEEINQLKKQLKTLQAQEDARHRHTDQRSSENRRSEPRSSEERRCEQWSSLKRNADQRDTEVTSDYKKQLRNLKEEIAVLSAEKSALQGRSSRSRSPSPAPRSRSCSRSRSASPSTAVKVRSPSPNRSKLSNVARKAALLSRFSDSYSQARLDAQCLLRRCIDKAETVQRIIYIATVEAFHVAKMAFRHFKIRVRKSLTPSYVGSNDFENAVSDYVICHLDLYDSQSSVNDVIRAMNVNPKISFPPVVDFCLLSDFIQEICCIAFAMQALEPPLDIAYGADGEVFNDCKYRRSYDSDFTAPLVLYHVWPALMENDCVIMKGEAVTRRGAFWNSVRSLSRCRSRSLSPICPRSQIGLSTMSRSRSPSPIRCGLPRF</sequence>
<evidence type="ECO:0000250" key="1">
    <source>
        <dbReference type="UniProtKB" id="Q6AYL6"/>
    </source>
</evidence>
<evidence type="ECO:0000250" key="2">
    <source>
        <dbReference type="UniProtKB" id="Q8TC71"/>
    </source>
</evidence>
<evidence type="ECO:0000255" key="3"/>
<evidence type="ECO:0000256" key="4">
    <source>
        <dbReference type="SAM" id="MobiDB-lite"/>
    </source>
</evidence>
<evidence type="ECO:0000305" key="5"/>